<feature type="chain" id="PRO_0000053338" description="Myoglobin">
    <location>
        <begin position="1"/>
        <end position="154"/>
    </location>
</feature>
<feature type="domain" description="Globin" evidence="7">
    <location>
        <begin position="2"/>
        <end position="148"/>
    </location>
</feature>
<feature type="binding site" evidence="5">
    <location>
        <position position="65"/>
    </location>
    <ligand>
        <name>nitrite</name>
        <dbReference type="ChEBI" id="CHEBI:16301"/>
    </ligand>
</feature>
<feature type="binding site" evidence="3 7">
    <location>
        <position position="65"/>
    </location>
    <ligand>
        <name>O2</name>
        <dbReference type="ChEBI" id="CHEBI:15379"/>
    </ligand>
</feature>
<feature type="binding site" description="proximal binding residue" evidence="1">
    <location>
        <position position="94"/>
    </location>
    <ligand>
        <name>heme b</name>
        <dbReference type="ChEBI" id="CHEBI:60344"/>
    </ligand>
    <ligandPart>
        <name>Fe</name>
        <dbReference type="ChEBI" id="CHEBI:18248"/>
    </ligandPart>
</feature>
<feature type="modified residue" description="Phosphoserine" evidence="6">
    <location>
        <position position="4"/>
    </location>
</feature>
<feature type="modified residue" description="Phosphothreonine" evidence="4">
    <location>
        <position position="68"/>
    </location>
</feature>
<organism>
    <name type="scientific">Semnopithecus entellus</name>
    <name type="common">Northern plains gray langur</name>
    <name type="synonym">Presbytis entellus</name>
    <dbReference type="NCBI Taxonomy" id="88029"/>
    <lineage>
        <taxon>Eukaryota</taxon>
        <taxon>Metazoa</taxon>
        <taxon>Chordata</taxon>
        <taxon>Craniata</taxon>
        <taxon>Vertebrata</taxon>
        <taxon>Euteleostomi</taxon>
        <taxon>Mammalia</taxon>
        <taxon>Eutheria</taxon>
        <taxon>Euarchontoglires</taxon>
        <taxon>Primates</taxon>
        <taxon>Haplorrhini</taxon>
        <taxon>Catarrhini</taxon>
        <taxon>Cercopithecidae</taxon>
        <taxon>Colobinae</taxon>
        <taxon>Semnopithecus</taxon>
    </lineage>
</organism>
<keyword id="KW-0963">Cytoplasm</keyword>
<keyword id="KW-0903">Direct protein sequencing</keyword>
<keyword id="KW-0349">Heme</keyword>
<keyword id="KW-0408">Iron</keyword>
<keyword id="KW-0479">Metal-binding</keyword>
<keyword id="KW-0514">Muscle protein</keyword>
<keyword id="KW-0560">Oxidoreductase</keyword>
<keyword id="KW-0561">Oxygen transport</keyword>
<keyword id="KW-0597">Phosphoprotein</keyword>
<keyword id="KW-0813">Transport</keyword>
<dbReference type="EC" id="1.7.-.-" evidence="1"/>
<dbReference type="EC" id="1.11.1.-" evidence="1"/>
<dbReference type="PIR" id="B90633">
    <property type="entry name" value="MYMQHL"/>
</dbReference>
<dbReference type="SMR" id="P68085"/>
<dbReference type="GO" id="GO:0070062">
    <property type="term" value="C:extracellular exosome"/>
    <property type="evidence" value="ECO:0007669"/>
    <property type="project" value="TreeGrafter"/>
</dbReference>
<dbReference type="GO" id="GO:0016528">
    <property type="term" value="C:sarcoplasm"/>
    <property type="evidence" value="ECO:0000250"/>
    <property type="project" value="UniProtKB"/>
</dbReference>
<dbReference type="GO" id="GO:0020037">
    <property type="term" value="F:heme binding"/>
    <property type="evidence" value="ECO:0007669"/>
    <property type="project" value="InterPro"/>
</dbReference>
<dbReference type="GO" id="GO:0046872">
    <property type="term" value="F:metal ion binding"/>
    <property type="evidence" value="ECO:0007669"/>
    <property type="project" value="UniProtKB-KW"/>
</dbReference>
<dbReference type="GO" id="GO:0098809">
    <property type="term" value="F:nitrite reductase activity"/>
    <property type="evidence" value="ECO:0000250"/>
    <property type="project" value="UniProtKB"/>
</dbReference>
<dbReference type="GO" id="GO:0019825">
    <property type="term" value="F:oxygen binding"/>
    <property type="evidence" value="ECO:0007669"/>
    <property type="project" value="InterPro"/>
</dbReference>
<dbReference type="GO" id="GO:0005344">
    <property type="term" value="F:oxygen carrier activity"/>
    <property type="evidence" value="ECO:0000250"/>
    <property type="project" value="UniProtKB"/>
</dbReference>
<dbReference type="GO" id="GO:0004601">
    <property type="term" value="F:peroxidase activity"/>
    <property type="evidence" value="ECO:0000250"/>
    <property type="project" value="UniProtKB"/>
</dbReference>
<dbReference type="GO" id="GO:0019430">
    <property type="term" value="P:removal of superoxide radicals"/>
    <property type="evidence" value="ECO:0000250"/>
    <property type="project" value="UniProtKB"/>
</dbReference>
<dbReference type="CDD" id="cd08926">
    <property type="entry name" value="Mb"/>
    <property type="match status" value="1"/>
</dbReference>
<dbReference type="Gene3D" id="6.10.140.2100">
    <property type="match status" value="1"/>
</dbReference>
<dbReference type="Gene3D" id="6.10.140.2110">
    <property type="match status" value="1"/>
</dbReference>
<dbReference type="InterPro" id="IPR000971">
    <property type="entry name" value="Globin"/>
</dbReference>
<dbReference type="InterPro" id="IPR009050">
    <property type="entry name" value="Globin-like_sf"/>
</dbReference>
<dbReference type="InterPro" id="IPR002335">
    <property type="entry name" value="Myoglobin"/>
</dbReference>
<dbReference type="PANTHER" id="PTHR47132">
    <property type="entry name" value="MYOGLOBIN"/>
    <property type="match status" value="1"/>
</dbReference>
<dbReference type="PANTHER" id="PTHR47132:SF1">
    <property type="entry name" value="MYOGLOBIN"/>
    <property type="match status" value="1"/>
</dbReference>
<dbReference type="Pfam" id="PF00042">
    <property type="entry name" value="Globin"/>
    <property type="match status" value="1"/>
</dbReference>
<dbReference type="PRINTS" id="PR00613">
    <property type="entry name" value="MYOGLOBIN"/>
</dbReference>
<dbReference type="SUPFAM" id="SSF46458">
    <property type="entry name" value="Globin-like"/>
    <property type="match status" value="1"/>
</dbReference>
<dbReference type="PROSITE" id="PS01033">
    <property type="entry name" value="GLOBIN"/>
    <property type="match status" value="1"/>
</dbReference>
<reference key="1">
    <citation type="journal article" date="1980" name="Biochim. Biophys. Acta">
        <title>The myoglobin of primates X.</title>
        <authorList>
            <person name="Dene H."/>
            <person name="Sazy J."/>
            <person name="Romero-Herrera A.E."/>
        </authorList>
    </citation>
    <scope>PARTIAL PROTEIN SEQUENCE</scope>
</reference>
<name>MYG_SEMEN</name>
<evidence type="ECO:0000250" key="1">
    <source>
        <dbReference type="UniProtKB" id="P02144"/>
    </source>
</evidence>
<evidence type="ECO:0000250" key="2">
    <source>
        <dbReference type="UniProtKB" id="P02185"/>
    </source>
</evidence>
<evidence type="ECO:0000250" key="3">
    <source>
        <dbReference type="UniProtKB" id="P02189"/>
    </source>
</evidence>
<evidence type="ECO:0000250" key="4">
    <source>
        <dbReference type="UniProtKB" id="P04247"/>
    </source>
</evidence>
<evidence type="ECO:0000250" key="5">
    <source>
        <dbReference type="UniProtKB" id="P68082"/>
    </source>
</evidence>
<evidence type="ECO:0000250" key="6">
    <source>
        <dbReference type="UniProtKB" id="Q9QZ76"/>
    </source>
</evidence>
<evidence type="ECO:0000255" key="7">
    <source>
        <dbReference type="PROSITE-ProRule" id="PRU00238"/>
    </source>
</evidence>
<accession>P68085</accession>
<accession>P02149</accession>
<sequence>MGLSDGEWQLVLNVWGKVEADIPSHGQEVLIRLFKGHPETLEKFDKFKHLKSEDEMKASEDLKKHGATVLTALGGILKKKGHHEAEIKPLAQSHATKHKIPVKYLELISESIIQVLQSKHPGDFGADAQGAMNKALELFRNDMAAKYKELGFQG</sequence>
<comment type="function">
    <text evidence="1">Monomeric heme protein which primary function is to store oxygen and facilitate its diffusion within muscle tissues. Reversibly binds oxygen through a pentacoordinated heme iron and enables its timely and efficient release as needed during periods of heightened demand. Depending on the oxidative conditions of tissues and cells, and in addition to its ability to bind oxygen, it also has a nitrite reductase activity whereby it regulates the production of bioactive nitric oxide. Under stress conditions, like hypoxia and anoxia, it also protects cells against reactive oxygen species thanks to its pseudoperoxidase activity.</text>
</comment>
<comment type="catalytic activity">
    <reaction evidence="1">
        <text>Fe(III)-heme b-[protein] + nitric oxide + H2O = Fe(II)-heme b-[protein] + nitrite + 2 H(+)</text>
        <dbReference type="Rhea" id="RHEA:77711"/>
        <dbReference type="Rhea" id="RHEA-COMP:18975"/>
        <dbReference type="Rhea" id="RHEA-COMP:18976"/>
        <dbReference type="ChEBI" id="CHEBI:15377"/>
        <dbReference type="ChEBI" id="CHEBI:15378"/>
        <dbReference type="ChEBI" id="CHEBI:16301"/>
        <dbReference type="ChEBI" id="CHEBI:16480"/>
        <dbReference type="ChEBI" id="CHEBI:55376"/>
        <dbReference type="ChEBI" id="CHEBI:60344"/>
    </reaction>
    <physiologicalReaction direction="right-to-left" evidence="1">
        <dbReference type="Rhea" id="RHEA:77713"/>
    </physiologicalReaction>
</comment>
<comment type="catalytic activity">
    <reaction evidence="1">
        <text>H2O2 + AH2 = A + 2 H2O</text>
        <dbReference type="Rhea" id="RHEA:30275"/>
        <dbReference type="ChEBI" id="CHEBI:13193"/>
        <dbReference type="ChEBI" id="CHEBI:15377"/>
        <dbReference type="ChEBI" id="CHEBI:16240"/>
        <dbReference type="ChEBI" id="CHEBI:17499"/>
    </reaction>
</comment>
<comment type="subunit">
    <text evidence="2">Monomeric.</text>
</comment>
<comment type="subcellular location">
    <subcellularLocation>
        <location evidence="1">Cytoplasm</location>
        <location evidence="1">Sarcoplasm</location>
    </subcellularLocation>
</comment>
<comment type="similarity">
    <text evidence="7">Belongs to the globin family.</text>
</comment>
<proteinExistence type="evidence at protein level"/>
<gene>
    <name type="primary">MB</name>
</gene>
<protein>
    <recommendedName>
        <fullName>Myoglobin</fullName>
    </recommendedName>
    <alternativeName>
        <fullName evidence="1">Nitrite reductase MB</fullName>
        <ecNumber evidence="1">1.7.-.-</ecNumber>
    </alternativeName>
    <alternativeName>
        <fullName evidence="1">Pseudoperoxidase MB</fullName>
        <ecNumber evidence="1">1.11.1.-</ecNumber>
    </alternativeName>
</protein>